<dbReference type="EMBL" id="CP000970">
    <property type="protein sequence ID" value="ACB18721.1"/>
    <property type="molecule type" value="Genomic_DNA"/>
</dbReference>
<dbReference type="RefSeq" id="WP_001296359.1">
    <property type="nucleotide sequence ID" value="NC_010498.1"/>
</dbReference>
<dbReference type="SMR" id="B1LDF3"/>
<dbReference type="KEGG" id="ecm:EcSMS35_3086"/>
<dbReference type="HOGENOM" id="CLU_113336_0_1_6"/>
<dbReference type="Proteomes" id="UP000007011">
    <property type="component" value="Chromosome"/>
</dbReference>
<dbReference type="GO" id="GO:0005737">
    <property type="term" value="C:cytoplasm"/>
    <property type="evidence" value="ECO:0007669"/>
    <property type="project" value="UniProtKB-SubCell"/>
</dbReference>
<dbReference type="GO" id="GO:0008270">
    <property type="term" value="F:zinc ion binding"/>
    <property type="evidence" value="ECO:0007669"/>
    <property type="project" value="UniProtKB-UniRule"/>
</dbReference>
<dbReference type="GO" id="GO:0006950">
    <property type="term" value="P:response to stress"/>
    <property type="evidence" value="ECO:0007669"/>
    <property type="project" value="UniProtKB-ARBA"/>
</dbReference>
<dbReference type="Gene3D" id="3.30.2010.10">
    <property type="entry name" value="Metalloproteases ('zincins'), catalytic domain"/>
    <property type="match status" value="1"/>
</dbReference>
<dbReference type="HAMAP" id="MF_00746">
    <property type="entry name" value="SprT"/>
    <property type="match status" value="1"/>
</dbReference>
<dbReference type="InterPro" id="IPR006640">
    <property type="entry name" value="SprT-like_domain"/>
</dbReference>
<dbReference type="InterPro" id="IPR035240">
    <property type="entry name" value="SprT_Zn_ribbon"/>
</dbReference>
<dbReference type="InterPro" id="IPR023483">
    <property type="entry name" value="Uncharacterised_SprT"/>
</dbReference>
<dbReference type="NCBIfam" id="NF003421">
    <property type="entry name" value="PRK04860.1"/>
    <property type="match status" value="1"/>
</dbReference>
<dbReference type="PANTHER" id="PTHR38773">
    <property type="entry name" value="PROTEIN SPRT"/>
    <property type="match status" value="1"/>
</dbReference>
<dbReference type="PANTHER" id="PTHR38773:SF1">
    <property type="entry name" value="PROTEIN SPRT"/>
    <property type="match status" value="1"/>
</dbReference>
<dbReference type="Pfam" id="PF10263">
    <property type="entry name" value="SprT-like"/>
    <property type="match status" value="1"/>
</dbReference>
<dbReference type="Pfam" id="PF17283">
    <property type="entry name" value="Zn_ribbon_SprT"/>
    <property type="match status" value="1"/>
</dbReference>
<dbReference type="SMART" id="SM00731">
    <property type="entry name" value="SprT"/>
    <property type="match status" value="1"/>
</dbReference>
<dbReference type="PROSITE" id="PS00142">
    <property type="entry name" value="ZINC_PROTEASE"/>
    <property type="match status" value="1"/>
</dbReference>
<accession>B1LDF3</accession>
<comment type="cofactor">
    <cofactor evidence="1">
        <name>Zn(2+)</name>
        <dbReference type="ChEBI" id="CHEBI:29105"/>
    </cofactor>
    <text evidence="1">Binds 1 zinc ion.</text>
</comment>
<comment type="subcellular location">
    <subcellularLocation>
        <location evidence="1">Cytoplasm</location>
    </subcellularLocation>
</comment>
<comment type="similarity">
    <text evidence="1">Belongs to the SprT family.</text>
</comment>
<gene>
    <name evidence="1" type="primary">sprT</name>
    <name type="ordered locus">EcSMS35_3086</name>
</gene>
<sequence length="165" mass="19335">MKTSRLPIAIQQAVMRRLREKLAQANLKLGRNYPEPKLSYTQRGTSAGTAWLESYEIRLNPVLLLENSEAFIEEVVPHELAHLLVWKHFGRVAPHGKEWKWMMESVLGVPARRTHQFELQSVRRNTFPYRCKCQEHQLTVRRHNRVVRGEAVYRCVHCGEQLIAK</sequence>
<proteinExistence type="inferred from homology"/>
<feature type="chain" id="PRO_1000133241" description="Protein SprT">
    <location>
        <begin position="1"/>
        <end position="165"/>
    </location>
</feature>
<feature type="domain" description="SprT-like" evidence="1">
    <location>
        <begin position="20"/>
        <end position="162"/>
    </location>
</feature>
<feature type="active site" evidence="1">
    <location>
        <position position="79"/>
    </location>
</feature>
<feature type="binding site" evidence="1">
    <location>
        <position position="78"/>
    </location>
    <ligand>
        <name>Zn(2+)</name>
        <dbReference type="ChEBI" id="CHEBI:29105"/>
    </ligand>
</feature>
<feature type="binding site" evidence="1">
    <location>
        <position position="82"/>
    </location>
    <ligand>
        <name>Zn(2+)</name>
        <dbReference type="ChEBI" id="CHEBI:29105"/>
    </ligand>
</feature>
<keyword id="KW-0963">Cytoplasm</keyword>
<keyword id="KW-0479">Metal-binding</keyword>
<keyword id="KW-0862">Zinc</keyword>
<name>SPRT_ECOSM</name>
<protein>
    <recommendedName>
        <fullName evidence="1">Protein SprT</fullName>
    </recommendedName>
</protein>
<organism>
    <name type="scientific">Escherichia coli (strain SMS-3-5 / SECEC)</name>
    <dbReference type="NCBI Taxonomy" id="439855"/>
    <lineage>
        <taxon>Bacteria</taxon>
        <taxon>Pseudomonadati</taxon>
        <taxon>Pseudomonadota</taxon>
        <taxon>Gammaproteobacteria</taxon>
        <taxon>Enterobacterales</taxon>
        <taxon>Enterobacteriaceae</taxon>
        <taxon>Escherichia</taxon>
    </lineage>
</organism>
<evidence type="ECO:0000255" key="1">
    <source>
        <dbReference type="HAMAP-Rule" id="MF_00746"/>
    </source>
</evidence>
<reference key="1">
    <citation type="journal article" date="2008" name="J. Bacteriol.">
        <title>Insights into the environmental resistance gene pool from the genome sequence of the multidrug-resistant environmental isolate Escherichia coli SMS-3-5.</title>
        <authorList>
            <person name="Fricke W.F."/>
            <person name="Wright M.S."/>
            <person name="Lindell A.H."/>
            <person name="Harkins D.M."/>
            <person name="Baker-Austin C."/>
            <person name="Ravel J."/>
            <person name="Stepanauskas R."/>
        </authorList>
    </citation>
    <scope>NUCLEOTIDE SEQUENCE [LARGE SCALE GENOMIC DNA]</scope>
    <source>
        <strain>SMS-3-5 / SECEC</strain>
    </source>
</reference>